<dbReference type="EMBL" id="CP001407">
    <property type="protein sequence ID" value="ACO27071.1"/>
    <property type="molecule type" value="Genomic_DNA"/>
</dbReference>
<dbReference type="RefSeq" id="WP_000872364.1">
    <property type="nucleotide sequence ID" value="NZ_CP009318.1"/>
</dbReference>
<dbReference type="SMR" id="C1ENB1"/>
<dbReference type="KEGG" id="bcx:BCA_3768"/>
<dbReference type="PATRIC" id="fig|572264.18.peg.3725"/>
<dbReference type="Proteomes" id="UP000002210">
    <property type="component" value="Chromosome"/>
</dbReference>
<dbReference type="GO" id="GO:0005886">
    <property type="term" value="C:plasma membrane"/>
    <property type="evidence" value="ECO:0007669"/>
    <property type="project" value="UniProtKB-SubCell"/>
</dbReference>
<dbReference type="GO" id="GO:0019835">
    <property type="term" value="P:cytolysis"/>
    <property type="evidence" value="ECO:0007669"/>
    <property type="project" value="UniProtKB-UniRule"/>
</dbReference>
<dbReference type="GO" id="GO:0031640">
    <property type="term" value="P:killing of cells of another organism"/>
    <property type="evidence" value="ECO:0007669"/>
    <property type="project" value="UniProtKB-KW"/>
</dbReference>
<dbReference type="GO" id="GO:0012501">
    <property type="term" value="P:programmed cell death"/>
    <property type="evidence" value="ECO:0007669"/>
    <property type="project" value="UniProtKB-UniRule"/>
</dbReference>
<dbReference type="HAMAP" id="MF_01143">
    <property type="entry name" value="CidA"/>
    <property type="match status" value="1"/>
</dbReference>
<dbReference type="InterPro" id="IPR023760">
    <property type="entry name" value="Holin-like_CidA"/>
</dbReference>
<dbReference type="InterPro" id="IPR005538">
    <property type="entry name" value="LrgA/CidA"/>
</dbReference>
<dbReference type="NCBIfam" id="NF002460">
    <property type="entry name" value="PRK01658.1"/>
    <property type="match status" value="1"/>
</dbReference>
<dbReference type="PANTHER" id="PTHR33931:SF2">
    <property type="entry name" value="HOLIN-LIKE PROTEIN CIDA"/>
    <property type="match status" value="1"/>
</dbReference>
<dbReference type="PANTHER" id="PTHR33931">
    <property type="entry name" value="HOLIN-LIKE PROTEIN CIDA-RELATED"/>
    <property type="match status" value="1"/>
</dbReference>
<dbReference type="Pfam" id="PF03788">
    <property type="entry name" value="LrgA"/>
    <property type="match status" value="1"/>
</dbReference>
<sequence>MKWWKLSGQILLLFCFAWTGEWIAKQAHLPVPGSIIGIFLLLISLKFNLVKKEWIQDGADFLLKELILFFIPSAVAVIRYKDTLSQYGIDLILIIMISTLCVTLVTGLLTELLLKRKGSVQ</sequence>
<comment type="function">
    <text evidence="1">Increases the activity of extracellular murein hydrolases possibly by mediating their export via hole formation. Inhibited by the antiholin-like proteins LrgAB. In an unstressed cell, the LrgAB products probably inhibit the function of the CidA protein. When a cell is stressed by the addition of antibiotics or by other factors in the environment, CidA possibly oligomerizes within the bacterial cell membrane, creating lesions that disrupt the proton motive force, which in turn results in loss of cell viability. These lesions are also hypothesized to regulate the subsequent cell lysis by either allowing the murein hydrolases access to the cell wall substrate and/or regulating their activity by a possible change in the cell wall pH that results from loss of membrane potential.</text>
</comment>
<comment type="subcellular location">
    <subcellularLocation>
        <location evidence="1">Cell membrane</location>
        <topology evidence="1">Multi-pass membrane protein</topology>
    </subcellularLocation>
</comment>
<comment type="similarity">
    <text evidence="1">Belongs to the CidA/LrgA family. CidA subfamily.</text>
</comment>
<reference key="1">
    <citation type="submission" date="2009-02" db="EMBL/GenBank/DDBJ databases">
        <title>Genome sequence of Bacillus cereus 03BB102.</title>
        <authorList>
            <person name="Dodson R.J."/>
            <person name="Jackson P."/>
            <person name="Munk A.C."/>
            <person name="Brettin T."/>
            <person name="Bruce D."/>
            <person name="Detter C."/>
            <person name="Tapia R."/>
            <person name="Han C."/>
            <person name="Sutton G."/>
            <person name="Sims D."/>
        </authorList>
    </citation>
    <scope>NUCLEOTIDE SEQUENCE [LARGE SCALE GENOMIC DNA]</scope>
    <source>
        <strain>03BB102</strain>
    </source>
</reference>
<feature type="chain" id="PRO_1000164104" description="Holin-like protein CidA">
    <location>
        <begin position="1"/>
        <end position="121"/>
    </location>
</feature>
<feature type="transmembrane region" description="Helical" evidence="1">
    <location>
        <begin position="3"/>
        <end position="23"/>
    </location>
</feature>
<feature type="transmembrane region" description="Helical" evidence="1">
    <location>
        <begin position="30"/>
        <end position="50"/>
    </location>
</feature>
<feature type="transmembrane region" description="Helical" evidence="1">
    <location>
        <begin position="58"/>
        <end position="78"/>
    </location>
</feature>
<feature type="transmembrane region" description="Helical" evidence="1">
    <location>
        <begin position="89"/>
        <end position="109"/>
    </location>
</feature>
<accession>C1ENB1</accession>
<keyword id="KW-1003">Cell membrane</keyword>
<keyword id="KW-0204">Cytolysis</keyword>
<keyword id="KW-0472">Membrane</keyword>
<keyword id="KW-0812">Transmembrane</keyword>
<keyword id="KW-1133">Transmembrane helix</keyword>
<evidence type="ECO:0000255" key="1">
    <source>
        <dbReference type="HAMAP-Rule" id="MF_01143"/>
    </source>
</evidence>
<proteinExistence type="inferred from homology"/>
<protein>
    <recommendedName>
        <fullName evidence="1">Holin-like protein CidA</fullName>
    </recommendedName>
</protein>
<gene>
    <name evidence="1" type="primary">cidA</name>
    <name type="ordered locus">BCA_3768</name>
</gene>
<name>CIDA_BACC3</name>
<organism>
    <name type="scientific">Bacillus cereus (strain 03BB102)</name>
    <dbReference type="NCBI Taxonomy" id="572264"/>
    <lineage>
        <taxon>Bacteria</taxon>
        <taxon>Bacillati</taxon>
        <taxon>Bacillota</taxon>
        <taxon>Bacilli</taxon>
        <taxon>Bacillales</taxon>
        <taxon>Bacillaceae</taxon>
        <taxon>Bacillus</taxon>
        <taxon>Bacillus cereus group</taxon>
    </lineage>
</organism>